<keyword id="KW-0150">Chloroplast</keyword>
<keyword id="KW-0472">Membrane</keyword>
<keyword id="KW-0602">Photosynthesis</keyword>
<keyword id="KW-0604">Photosystem II</keyword>
<keyword id="KW-0934">Plastid</keyword>
<keyword id="KW-1185">Reference proteome</keyword>
<keyword id="KW-0793">Thylakoid</keyword>
<keyword id="KW-0812">Transmembrane</keyword>
<keyword id="KW-1133">Transmembrane helix</keyword>
<dbReference type="EMBL" id="Z00044">
    <property type="protein sequence ID" value="CAA77423.2"/>
    <property type="molecule type" value="Genomic_DNA"/>
</dbReference>
<dbReference type="RefSeq" id="NP_054527.1">
    <property type="nucleotide sequence ID" value="NC_001879.2"/>
</dbReference>
<dbReference type="SMR" id="P12184"/>
<dbReference type="GeneID" id="800438"/>
<dbReference type="KEGG" id="nta:800438"/>
<dbReference type="OrthoDB" id="1558483at2759"/>
<dbReference type="Proteomes" id="UP000084051">
    <property type="component" value="Unplaced"/>
</dbReference>
<dbReference type="GO" id="GO:0009535">
    <property type="term" value="C:chloroplast thylakoid membrane"/>
    <property type="evidence" value="ECO:0007669"/>
    <property type="project" value="UniProtKB-SubCell"/>
</dbReference>
<dbReference type="GO" id="GO:0009539">
    <property type="term" value="C:photosystem II reaction center"/>
    <property type="evidence" value="ECO:0007669"/>
    <property type="project" value="InterPro"/>
</dbReference>
<dbReference type="GO" id="GO:0015979">
    <property type="term" value="P:photosynthesis"/>
    <property type="evidence" value="ECO:0007669"/>
    <property type="project" value="UniProtKB-UniRule"/>
</dbReference>
<dbReference type="HAMAP" id="MF_00808">
    <property type="entry name" value="PSII_PsbT"/>
    <property type="match status" value="1"/>
</dbReference>
<dbReference type="InterPro" id="IPR001743">
    <property type="entry name" value="PSII_PsbT"/>
</dbReference>
<dbReference type="InterPro" id="IPR037268">
    <property type="entry name" value="PSII_PsbT_sf"/>
</dbReference>
<dbReference type="PANTHER" id="PTHR36411">
    <property type="match status" value="1"/>
</dbReference>
<dbReference type="PANTHER" id="PTHR36411:SF2">
    <property type="entry name" value="PHOTOSYSTEM II REACTION CENTER PROTEIN T"/>
    <property type="match status" value="1"/>
</dbReference>
<dbReference type="Pfam" id="PF01405">
    <property type="entry name" value="PsbT"/>
    <property type="match status" value="1"/>
</dbReference>
<dbReference type="SUPFAM" id="SSF161029">
    <property type="entry name" value="Photosystem II reaction center protein T, PsbT"/>
    <property type="match status" value="1"/>
</dbReference>
<evidence type="ECO:0000255" key="1">
    <source>
        <dbReference type="HAMAP-Rule" id="MF_00808"/>
    </source>
</evidence>
<sequence length="34" mass="3932">MEALVYTFLLVSTLGIIFFAIFFREPPKVPTKKN</sequence>
<protein>
    <recommendedName>
        <fullName evidence="1">Photosystem II reaction center protein T</fullName>
        <shortName evidence="1">PSII-T</shortName>
    </recommendedName>
</protein>
<accession>P12184</accession>
<proteinExistence type="inferred from homology"/>
<organism>
    <name type="scientific">Nicotiana tabacum</name>
    <name type="common">Common tobacco</name>
    <dbReference type="NCBI Taxonomy" id="4097"/>
    <lineage>
        <taxon>Eukaryota</taxon>
        <taxon>Viridiplantae</taxon>
        <taxon>Streptophyta</taxon>
        <taxon>Embryophyta</taxon>
        <taxon>Tracheophyta</taxon>
        <taxon>Spermatophyta</taxon>
        <taxon>Magnoliopsida</taxon>
        <taxon>eudicotyledons</taxon>
        <taxon>Gunneridae</taxon>
        <taxon>Pentapetalae</taxon>
        <taxon>asterids</taxon>
        <taxon>lamiids</taxon>
        <taxon>Solanales</taxon>
        <taxon>Solanaceae</taxon>
        <taxon>Nicotianoideae</taxon>
        <taxon>Nicotianeae</taxon>
        <taxon>Nicotiana</taxon>
    </lineage>
</organism>
<reference key="1">
    <citation type="journal article" date="1986" name="EMBO J.">
        <title>The complete nucleotide sequence of the tobacco chloroplast genome: its gene organization and expression.</title>
        <authorList>
            <person name="Shinozaki K."/>
            <person name="Ohme M."/>
            <person name="Tanaka M."/>
            <person name="Wakasugi T."/>
            <person name="Hayashida N."/>
            <person name="Matsubayashi T."/>
            <person name="Zaita N."/>
            <person name="Chunwongse J."/>
            <person name="Obokata J."/>
            <person name="Yamaguchi-Shinozaki K."/>
            <person name="Ohto C."/>
            <person name="Torazawa K."/>
            <person name="Meng B.-Y."/>
            <person name="Sugita M."/>
            <person name="Deno H."/>
            <person name="Kamogashira T."/>
            <person name="Yamada K."/>
            <person name="Kusuda J."/>
            <person name="Takaiwa F."/>
            <person name="Kato A."/>
            <person name="Tohdoh N."/>
            <person name="Shimada H."/>
            <person name="Sugiura M."/>
        </authorList>
    </citation>
    <scope>NUCLEOTIDE SEQUENCE [LARGE SCALE GENOMIC DNA]</scope>
    <source>
        <strain>cv. Bright Yellow 4</strain>
    </source>
</reference>
<feature type="chain" id="PRO_0000217992" description="Photosystem II reaction center protein T">
    <location>
        <begin position="1"/>
        <end position="34"/>
    </location>
</feature>
<feature type="transmembrane region" description="Helical" evidence="1">
    <location>
        <begin position="3"/>
        <end position="23"/>
    </location>
</feature>
<gene>
    <name evidence="1" type="primary">psbT</name>
    <name type="synonym">ycf8</name>
</gene>
<comment type="function">
    <text evidence="1">Found at the monomer-monomer interface of the photosystem II (PS II) dimer, plays a role in assembly and dimerization of PSII. PSII is a light-driven water plastoquinone oxidoreductase, using light energy to abstract electrons from H(2)O, generating a proton gradient subsequently used for ATP formation.</text>
</comment>
<comment type="subunit">
    <text evidence="1">PSII is composed of 1 copy each of membrane proteins PsbA, PsbB, PsbC, PsbD, PsbE, PsbF, PsbH, PsbI, PsbJ, PsbK, PsbL, PsbM, PsbT, PsbY, PsbZ, Psb30/Ycf12, at least 3 peripheral proteins of the oxygen-evolving complex and a large number of cofactors. It forms dimeric complexes.</text>
</comment>
<comment type="subcellular location">
    <subcellularLocation>
        <location evidence="1">Plastid</location>
        <location evidence="1">Chloroplast thylakoid membrane</location>
        <topology evidence="1">Single-pass membrane protein</topology>
    </subcellularLocation>
</comment>
<comment type="similarity">
    <text evidence="1">Belongs to the PsbT family.</text>
</comment>
<geneLocation type="chloroplast"/>
<name>PSBT_TOBAC</name>